<accession>Q6GHG0</accession>
<proteinExistence type="evidence at protein level"/>
<comment type="function">
    <text evidence="1">An RNase that has 5'-3' exonuclease and possibly endoonuclease activity. Involved in maturation of rRNA and in some organisms also mRNA maturation and/or decay (By similarity).</text>
</comment>
<comment type="cofactor">
    <cofactor evidence="2">
        <name>Zn(2+)</name>
        <dbReference type="ChEBI" id="CHEBI:29105"/>
    </cofactor>
    <text evidence="2">Binds up to 2 Zn(2+) ions per subunit. It is not clear if Zn(2+) or Mg(2+) is physiologically important.</text>
</comment>
<comment type="subunit">
    <text evidence="2">Homodimer, may be a subunit of the RNA degradosome.</text>
</comment>
<comment type="interaction">
    <interactant intactId="EBI-6415302">
        <id>Q6GHG0</id>
    </interactant>
    <interactant intactId="EBI-6415308">
        <id>Q6GHZ6</id>
        <label>rnj1</label>
    </interactant>
    <organismsDiffer>false</organismsDiffer>
    <experiments>4</experiments>
</comment>
<comment type="interaction">
    <interactant intactId="EBI-6415302">
        <id>Q6GHG0</id>
    </interactant>
    <interactant intactId="EBI-6415302">
        <id>Q6GHG0</id>
        <label>rnj2</label>
    </interactant>
    <organismsDiffer>false</organismsDiffer>
    <experiments>2</experiments>
</comment>
<comment type="subcellular location">
    <subcellularLocation>
        <location evidence="2">Cytoplasm</location>
    </subcellularLocation>
</comment>
<comment type="similarity">
    <text evidence="2">Belongs to the metallo-beta-lactamase superfamily. RNA-metabolizing metallo-beta-lactamase-like family. Bacterial RNase J subfamily.</text>
</comment>
<name>RNJ2_STAAR</name>
<organism>
    <name type="scientific">Staphylococcus aureus (strain MRSA252)</name>
    <dbReference type="NCBI Taxonomy" id="282458"/>
    <lineage>
        <taxon>Bacteria</taxon>
        <taxon>Bacillati</taxon>
        <taxon>Bacillota</taxon>
        <taxon>Bacilli</taxon>
        <taxon>Bacillales</taxon>
        <taxon>Staphylococcaceae</taxon>
        <taxon>Staphylococcus</taxon>
    </lineage>
</organism>
<evidence type="ECO:0000250" key="1"/>
<evidence type="ECO:0000255" key="2">
    <source>
        <dbReference type="HAMAP-Rule" id="MF_01491"/>
    </source>
</evidence>
<gene>
    <name evidence="2" type="primary">rnj2</name>
    <name type="ordered locus">SAR1251</name>
</gene>
<dbReference type="EC" id="3.1.-.-" evidence="2"/>
<dbReference type="EMBL" id="BX571856">
    <property type="protein sequence ID" value="CAG40253.1"/>
    <property type="molecule type" value="Genomic_DNA"/>
</dbReference>
<dbReference type="SMR" id="Q6GHG0"/>
<dbReference type="IntAct" id="Q6GHG0">
    <property type="interactions" value="1"/>
</dbReference>
<dbReference type="KEGG" id="sar:SAR1251"/>
<dbReference type="HOGENOM" id="CLU_008727_3_1_9"/>
<dbReference type="Proteomes" id="UP000000596">
    <property type="component" value="Chromosome"/>
</dbReference>
<dbReference type="GO" id="GO:0005737">
    <property type="term" value="C:cytoplasm"/>
    <property type="evidence" value="ECO:0007669"/>
    <property type="project" value="UniProtKB-SubCell"/>
</dbReference>
<dbReference type="GO" id="GO:0004534">
    <property type="term" value="F:5'-3' RNA exonuclease activity"/>
    <property type="evidence" value="ECO:0007669"/>
    <property type="project" value="UniProtKB-UniRule"/>
</dbReference>
<dbReference type="GO" id="GO:0042802">
    <property type="term" value="F:identical protein binding"/>
    <property type="evidence" value="ECO:0000353"/>
    <property type="project" value="IntAct"/>
</dbReference>
<dbReference type="GO" id="GO:0003723">
    <property type="term" value="F:RNA binding"/>
    <property type="evidence" value="ECO:0007669"/>
    <property type="project" value="UniProtKB-UniRule"/>
</dbReference>
<dbReference type="GO" id="GO:0004521">
    <property type="term" value="F:RNA endonuclease activity"/>
    <property type="evidence" value="ECO:0007669"/>
    <property type="project" value="UniProtKB-UniRule"/>
</dbReference>
<dbReference type="GO" id="GO:0008270">
    <property type="term" value="F:zinc ion binding"/>
    <property type="evidence" value="ECO:0007669"/>
    <property type="project" value="InterPro"/>
</dbReference>
<dbReference type="GO" id="GO:0006364">
    <property type="term" value="P:rRNA processing"/>
    <property type="evidence" value="ECO:0007669"/>
    <property type="project" value="UniProtKB-UniRule"/>
</dbReference>
<dbReference type="CDD" id="cd07714">
    <property type="entry name" value="RNaseJ_MBL-fold"/>
    <property type="match status" value="1"/>
</dbReference>
<dbReference type="FunFam" id="3.10.20.580:FF:000001">
    <property type="entry name" value="Ribonuclease J"/>
    <property type="match status" value="1"/>
</dbReference>
<dbReference type="FunFam" id="3.40.50.10710:FF:000002">
    <property type="entry name" value="Ribonuclease J 2"/>
    <property type="match status" value="1"/>
</dbReference>
<dbReference type="Gene3D" id="3.10.20.580">
    <property type="match status" value="1"/>
</dbReference>
<dbReference type="Gene3D" id="3.40.50.10710">
    <property type="entry name" value="Metallo-hydrolase/oxidoreductase"/>
    <property type="match status" value="1"/>
</dbReference>
<dbReference type="Gene3D" id="3.60.15.10">
    <property type="entry name" value="Ribonuclease Z/Hydroxyacylglutathione hydrolase-like"/>
    <property type="match status" value="1"/>
</dbReference>
<dbReference type="HAMAP" id="MF_01491">
    <property type="entry name" value="RNase_J_bact"/>
    <property type="match status" value="1"/>
</dbReference>
<dbReference type="InterPro" id="IPR001279">
    <property type="entry name" value="Metallo-B-lactamas"/>
</dbReference>
<dbReference type="InterPro" id="IPR036866">
    <property type="entry name" value="RibonucZ/Hydroxyglut_hydro"/>
</dbReference>
<dbReference type="InterPro" id="IPR011108">
    <property type="entry name" value="RMMBL"/>
</dbReference>
<dbReference type="InterPro" id="IPR004613">
    <property type="entry name" value="RNase_J"/>
</dbReference>
<dbReference type="InterPro" id="IPR042173">
    <property type="entry name" value="RNase_J_2"/>
</dbReference>
<dbReference type="InterPro" id="IPR055132">
    <property type="entry name" value="RNase_J_b_CASP"/>
</dbReference>
<dbReference type="InterPro" id="IPR030854">
    <property type="entry name" value="RNase_J_bac"/>
</dbReference>
<dbReference type="InterPro" id="IPR041636">
    <property type="entry name" value="RNase_J_C"/>
</dbReference>
<dbReference type="NCBIfam" id="TIGR00649">
    <property type="entry name" value="MG423"/>
    <property type="match status" value="1"/>
</dbReference>
<dbReference type="PANTHER" id="PTHR43694">
    <property type="entry name" value="RIBONUCLEASE J"/>
    <property type="match status" value="1"/>
</dbReference>
<dbReference type="PANTHER" id="PTHR43694:SF4">
    <property type="entry name" value="RIBONUCLEASE J 2"/>
    <property type="match status" value="1"/>
</dbReference>
<dbReference type="Pfam" id="PF00753">
    <property type="entry name" value="Lactamase_B"/>
    <property type="match status" value="1"/>
</dbReference>
<dbReference type="Pfam" id="PF07521">
    <property type="entry name" value="RMMBL"/>
    <property type="match status" value="1"/>
</dbReference>
<dbReference type="Pfam" id="PF22505">
    <property type="entry name" value="RNase_J_b_CASP"/>
    <property type="match status" value="1"/>
</dbReference>
<dbReference type="Pfam" id="PF17770">
    <property type="entry name" value="RNase_J_C"/>
    <property type="match status" value="1"/>
</dbReference>
<dbReference type="PIRSF" id="PIRSF004803">
    <property type="entry name" value="RnjA"/>
    <property type="match status" value="1"/>
</dbReference>
<dbReference type="SMART" id="SM00849">
    <property type="entry name" value="Lactamase_B"/>
    <property type="match status" value="1"/>
</dbReference>
<dbReference type="SUPFAM" id="SSF56281">
    <property type="entry name" value="Metallo-hydrolase/oxidoreductase"/>
    <property type="match status" value="1"/>
</dbReference>
<reference key="1">
    <citation type="journal article" date="2004" name="Proc. Natl. Acad. Sci. U.S.A.">
        <title>Complete genomes of two clinical Staphylococcus aureus strains: evidence for the rapid evolution of virulence and drug resistance.</title>
        <authorList>
            <person name="Holden M.T.G."/>
            <person name="Feil E.J."/>
            <person name="Lindsay J.A."/>
            <person name="Peacock S.J."/>
            <person name="Day N.P.J."/>
            <person name="Enright M.C."/>
            <person name="Foster T.J."/>
            <person name="Moore C.E."/>
            <person name="Hurst L."/>
            <person name="Atkin R."/>
            <person name="Barron A."/>
            <person name="Bason N."/>
            <person name="Bentley S.D."/>
            <person name="Chillingworth C."/>
            <person name="Chillingworth T."/>
            <person name="Churcher C."/>
            <person name="Clark L."/>
            <person name="Corton C."/>
            <person name="Cronin A."/>
            <person name="Doggett J."/>
            <person name="Dowd L."/>
            <person name="Feltwell T."/>
            <person name="Hance Z."/>
            <person name="Harris B."/>
            <person name="Hauser H."/>
            <person name="Holroyd S."/>
            <person name="Jagels K."/>
            <person name="James K.D."/>
            <person name="Lennard N."/>
            <person name="Line A."/>
            <person name="Mayes R."/>
            <person name="Moule S."/>
            <person name="Mungall K."/>
            <person name="Ormond D."/>
            <person name="Quail M.A."/>
            <person name="Rabbinowitsch E."/>
            <person name="Rutherford K.M."/>
            <person name="Sanders M."/>
            <person name="Sharp S."/>
            <person name="Simmonds M."/>
            <person name="Stevens K."/>
            <person name="Whitehead S."/>
            <person name="Barrell B.G."/>
            <person name="Spratt B.G."/>
            <person name="Parkhill J."/>
        </authorList>
    </citation>
    <scope>NUCLEOTIDE SEQUENCE [LARGE SCALE GENOMIC DNA]</scope>
    <source>
        <strain>MRSA252</strain>
    </source>
</reference>
<sequence length="557" mass="62618">MSLIKKKNKDIRIIPLGGVGEIAKNMYIVEVDDEMFMLDAGLMFPEDEMLGIDIVIPDISYVLENKEKLKGIFLTHGHEHAIGAVSYVLEQLDAPVYGSKLTIALIKENMKARNIDKKVRYYTVNNDSIMRFKNVNISFFNTTHSIPDSLGVCIHTSYGAIVYTGEFKFDQSLHGHYAPDIKRMAEIGEEGVFVLISDSTEAEKPGYNTPENVIEHHMYDAFAKVRGRLIVSCYASNFIRIQQVLNIASKLNRKVSFLGRSLESSFNIARKMGYFDIPKDLLIPITEVDNYPKNEVIIIATGMQGEPVEALSQMAQHKHKIMNIEEGDSVFLAITASANMEVIIANTLNELVRAGAHIIPNNKKIHASSHGCMEELKMMINIMKPEYFIPVQGEFKMQIAHAKLAAEAGVAPEKIFLVEKGDVINYNGKDMILNEKVNSGNILIDGIGIGDVGNIVLRDRHLLAEDGIFIAVVTLDPKNRRIAAGPEIQSRGFVYVRESEDLLREAEEKVREIVEAGLQEKRIEWSEIKQNMRDQISKLLFESTKRRPMIIPVISEI</sequence>
<protein>
    <recommendedName>
        <fullName evidence="2">Ribonuclease J 2</fullName>
        <shortName evidence="2">RNase J2</shortName>
        <ecNumber evidence="2">3.1.-.-</ecNumber>
    </recommendedName>
</protein>
<keyword id="KW-0963">Cytoplasm</keyword>
<keyword id="KW-0255">Endonuclease</keyword>
<keyword id="KW-0269">Exonuclease</keyword>
<keyword id="KW-0378">Hydrolase</keyword>
<keyword id="KW-0479">Metal-binding</keyword>
<keyword id="KW-0540">Nuclease</keyword>
<keyword id="KW-0694">RNA-binding</keyword>
<keyword id="KW-0698">rRNA processing</keyword>
<keyword id="KW-0862">Zinc</keyword>
<feature type="chain" id="PRO_0000286847" description="Ribonuclease J 2">
    <location>
        <begin position="1"/>
        <end position="557"/>
    </location>
</feature>
<feature type="binding site" evidence="2">
    <location>
        <position position="76"/>
    </location>
    <ligand>
        <name>Zn(2+)</name>
        <dbReference type="ChEBI" id="CHEBI:29105"/>
        <note>catalytic</note>
    </ligand>
</feature>
<feature type="binding site" evidence="2">
    <location>
        <position position="78"/>
    </location>
    <ligand>
        <name>Zn(2+)</name>
        <dbReference type="ChEBI" id="CHEBI:29105"/>
        <note>catalytic</note>
    </ligand>
</feature>
<feature type="binding site" evidence="2">
    <location>
        <position position="144"/>
    </location>
    <ligand>
        <name>Zn(2+)</name>
        <dbReference type="ChEBI" id="CHEBI:29105"/>
        <note>catalytic</note>
    </ligand>
</feature>
<feature type="binding site" evidence="2">
    <location>
        <position position="166"/>
    </location>
    <ligand>
        <name>Zn(2+)</name>
        <dbReference type="ChEBI" id="CHEBI:29105"/>
        <note>catalytic</note>
    </ligand>
</feature>
<feature type="binding site" evidence="2">
    <location>
        <begin position="366"/>
        <end position="370"/>
    </location>
    <ligand>
        <name>substrate</name>
    </ligand>
</feature>